<proteinExistence type="evidence at transcript level"/>
<sequence>MHNLSLFEPGRGNVSCGGPFLGCPNESNPAPLPLPQPLAVAVPVVYGVICAVGLAGNSAVLYVLLRTPRMKTVTNVFILNLAIADELFTLVLPINIADFLLRRWPFGEVMCKLIVAVDQYNTFSSLYFLAVMSADRYLVVLATAESRRVSGRTYGAARAVSLAVWALVTLVVLPFAVFARLDEEQGRRQCVLVFPQPEAFWWRASRLYTLVLGFAIPVSTICALYITLLCRLRAIQLDSHAKALDRAKKRVTLLVVAILAVCLLCWTPYHLSTIVALTTDLPQTPLVIGISYFITSLSYANSCLNPFLYAFLDDSFRRSLRQLVSCRTA</sequence>
<reference key="1">
    <citation type="submission" date="2004-03" db="EMBL/GenBank/DDBJ databases">
        <title>Pharmacological characterization of rat GPR7.</title>
        <authorList>
            <person name="Nothacker H.-P."/>
            <person name="Wang Z."/>
            <person name="Civelli O."/>
        </authorList>
    </citation>
    <scope>NUCLEOTIDE SEQUENCE [MRNA]</scope>
    <source>
        <strain>Sprague-Dawley</strain>
        <tissue>Brain</tissue>
    </source>
</reference>
<dbReference type="EMBL" id="AY577901">
    <property type="protein sequence ID" value="AAT72915.1"/>
    <property type="molecule type" value="mRNA"/>
</dbReference>
<dbReference type="RefSeq" id="NP_001014784.1">
    <property type="nucleotide sequence ID" value="NM_001014784.2"/>
</dbReference>
<dbReference type="SMR" id="Q56UD9"/>
<dbReference type="FunCoup" id="Q56UD9">
    <property type="interactions" value="32"/>
</dbReference>
<dbReference type="STRING" id="10116.ENSRNOP00000010032"/>
<dbReference type="GuidetoPHARMACOLOGY" id="303"/>
<dbReference type="GlyCosmos" id="Q56UD9">
    <property type="glycosylation" value="3 sites, No reported glycans"/>
</dbReference>
<dbReference type="GlyGen" id="Q56UD9">
    <property type="glycosylation" value="3 sites"/>
</dbReference>
<dbReference type="PhosphoSitePlus" id="Q56UD9"/>
<dbReference type="PaxDb" id="10116-ENSRNOP00000010032"/>
<dbReference type="Ensembl" id="ENSRNOT00000010032.3">
    <property type="protein sequence ID" value="ENSRNOP00000010032.2"/>
    <property type="gene ID" value="ENSRNOG00000007640.3"/>
</dbReference>
<dbReference type="GeneID" id="297795"/>
<dbReference type="KEGG" id="rno:297795"/>
<dbReference type="UCSC" id="RGD:1305917">
    <property type="organism name" value="rat"/>
</dbReference>
<dbReference type="AGR" id="RGD:1305917"/>
<dbReference type="CTD" id="2831"/>
<dbReference type="RGD" id="1305917">
    <property type="gene designation" value="Npbwr1"/>
</dbReference>
<dbReference type="eggNOG" id="KOG3656">
    <property type="taxonomic scope" value="Eukaryota"/>
</dbReference>
<dbReference type="GeneTree" id="ENSGT00940000161936"/>
<dbReference type="HOGENOM" id="CLU_009579_8_1_1"/>
<dbReference type="InParanoid" id="Q56UD9"/>
<dbReference type="OMA" id="YKLRHMH"/>
<dbReference type="OrthoDB" id="6076970at2759"/>
<dbReference type="PhylomeDB" id="Q56UD9"/>
<dbReference type="TreeFam" id="TF315737"/>
<dbReference type="Reactome" id="R-RNO-375276">
    <property type="pathway name" value="Peptide ligand-binding receptors"/>
</dbReference>
<dbReference type="Reactome" id="R-RNO-418594">
    <property type="pathway name" value="G alpha (i) signalling events"/>
</dbReference>
<dbReference type="PRO" id="PR:Q56UD9"/>
<dbReference type="Proteomes" id="UP000002494">
    <property type="component" value="Chromosome 5"/>
</dbReference>
<dbReference type="GO" id="GO:0043005">
    <property type="term" value="C:neuron projection"/>
    <property type="evidence" value="ECO:0000318"/>
    <property type="project" value="GO_Central"/>
</dbReference>
<dbReference type="GO" id="GO:0005886">
    <property type="term" value="C:plasma membrane"/>
    <property type="evidence" value="ECO:0000318"/>
    <property type="project" value="GO_Central"/>
</dbReference>
<dbReference type="GO" id="GO:0004930">
    <property type="term" value="F:G protein-coupled receptor activity"/>
    <property type="evidence" value="ECO:0000318"/>
    <property type="project" value="GO_Central"/>
</dbReference>
<dbReference type="GO" id="GO:0042923">
    <property type="term" value="F:neuropeptide binding"/>
    <property type="evidence" value="ECO:0000318"/>
    <property type="project" value="GO_Central"/>
</dbReference>
<dbReference type="GO" id="GO:0008188">
    <property type="term" value="F:neuropeptide receptor activity"/>
    <property type="evidence" value="ECO:0007669"/>
    <property type="project" value="InterPro"/>
</dbReference>
<dbReference type="GO" id="GO:0007186">
    <property type="term" value="P:G protein-coupled receptor signaling pathway"/>
    <property type="evidence" value="ECO:0000266"/>
    <property type="project" value="RGD"/>
</dbReference>
<dbReference type="GO" id="GO:0007218">
    <property type="term" value="P:neuropeptide signaling pathway"/>
    <property type="evidence" value="ECO:0000318"/>
    <property type="project" value="GO_Central"/>
</dbReference>
<dbReference type="GO" id="GO:0019222">
    <property type="term" value="P:regulation of metabolic process"/>
    <property type="evidence" value="ECO:0000266"/>
    <property type="project" value="RGD"/>
</dbReference>
<dbReference type="CDD" id="cd15087">
    <property type="entry name" value="7tmA_NPBWR"/>
    <property type="match status" value="1"/>
</dbReference>
<dbReference type="FunFam" id="1.20.1070.10:FF:000102">
    <property type="entry name" value="neuropeptides B/W receptor type 1"/>
    <property type="match status" value="1"/>
</dbReference>
<dbReference type="Gene3D" id="1.20.1070.10">
    <property type="entry name" value="Rhodopsin 7-helix transmembrane proteins"/>
    <property type="match status" value="1"/>
</dbReference>
<dbReference type="InterPro" id="IPR000276">
    <property type="entry name" value="GPCR_Rhodpsn"/>
</dbReference>
<dbReference type="InterPro" id="IPR017452">
    <property type="entry name" value="GPCR_Rhodpsn_7TM"/>
</dbReference>
<dbReference type="InterPro" id="IPR009150">
    <property type="entry name" value="Neuropept_B/W_rcpt"/>
</dbReference>
<dbReference type="PANTHER" id="PTHR24229:SF47">
    <property type="entry name" value="NEUROPEPTIDES B_W RECEPTOR TYPE 1"/>
    <property type="match status" value="1"/>
</dbReference>
<dbReference type="PANTHER" id="PTHR24229">
    <property type="entry name" value="NEUROPEPTIDES RECEPTOR"/>
    <property type="match status" value="1"/>
</dbReference>
<dbReference type="Pfam" id="PF00001">
    <property type="entry name" value="7tm_1"/>
    <property type="match status" value="1"/>
</dbReference>
<dbReference type="PRINTS" id="PR00237">
    <property type="entry name" value="GPCRRHODOPSN"/>
</dbReference>
<dbReference type="PRINTS" id="PR01855">
    <property type="entry name" value="NRPEPTIDEWR"/>
</dbReference>
<dbReference type="SUPFAM" id="SSF81321">
    <property type="entry name" value="Family A G protein-coupled receptor-like"/>
    <property type="match status" value="1"/>
</dbReference>
<dbReference type="PROSITE" id="PS00237">
    <property type="entry name" value="G_PROTEIN_RECEP_F1_1"/>
    <property type="match status" value="1"/>
</dbReference>
<dbReference type="PROSITE" id="PS50262">
    <property type="entry name" value="G_PROTEIN_RECEP_F1_2"/>
    <property type="match status" value="1"/>
</dbReference>
<accession>Q56UD9</accession>
<comment type="function">
    <text evidence="1">Interacts specifically with a number of opioid ligands. Receptor for neuropeptides B and W, which may be involved in neuroendocrine system regulation, food intake and the organization of other signals (By similarity).</text>
</comment>
<comment type="subcellular location">
    <subcellularLocation>
        <location>Cell membrane</location>
        <topology>Multi-pass membrane protein</topology>
    </subcellularLocation>
</comment>
<comment type="similarity">
    <text evidence="3">Belongs to the G-protein coupled receptor 1 family.</text>
</comment>
<feature type="chain" id="PRO_0000069520" description="Neuropeptides B/W receptor type 1">
    <location>
        <begin position="1"/>
        <end position="329"/>
    </location>
</feature>
<feature type="topological domain" description="Extracellular" evidence="2">
    <location>
        <begin position="1"/>
        <end position="39"/>
    </location>
</feature>
<feature type="transmembrane region" description="Helical; Name=1" evidence="2">
    <location>
        <begin position="40"/>
        <end position="63"/>
    </location>
</feature>
<feature type="topological domain" description="Cytoplasmic" evidence="2">
    <location>
        <begin position="64"/>
        <end position="74"/>
    </location>
</feature>
<feature type="transmembrane region" description="Helical; Name=2" evidence="2">
    <location>
        <begin position="75"/>
        <end position="99"/>
    </location>
</feature>
<feature type="topological domain" description="Extracellular" evidence="2">
    <location>
        <begin position="100"/>
        <end position="114"/>
    </location>
</feature>
<feature type="transmembrane region" description="Helical; Name=3" evidence="2">
    <location>
        <begin position="115"/>
        <end position="134"/>
    </location>
</feature>
<feature type="topological domain" description="Cytoplasmic" evidence="2">
    <location>
        <begin position="135"/>
        <end position="159"/>
    </location>
</feature>
<feature type="transmembrane region" description="Helical; Name=4" evidence="2">
    <location>
        <begin position="160"/>
        <end position="179"/>
    </location>
</feature>
<feature type="topological domain" description="Extracellular" evidence="2">
    <location>
        <begin position="180"/>
        <end position="204"/>
    </location>
</feature>
<feature type="transmembrane region" description="Helical; Name=5" evidence="2">
    <location>
        <begin position="205"/>
        <end position="226"/>
    </location>
</feature>
<feature type="topological domain" description="Cytoplasmic" evidence="2">
    <location>
        <begin position="227"/>
        <end position="250"/>
    </location>
</feature>
<feature type="transmembrane region" description="Helical; Name=6" evidence="2">
    <location>
        <begin position="251"/>
        <end position="275"/>
    </location>
</feature>
<feature type="topological domain" description="Extracellular" evidence="2">
    <location>
        <begin position="276"/>
        <end position="285"/>
    </location>
</feature>
<feature type="transmembrane region" description="Helical; Name=7" evidence="2">
    <location>
        <begin position="286"/>
        <end position="300"/>
    </location>
</feature>
<feature type="topological domain" description="Cytoplasmic" evidence="2">
    <location>
        <begin position="301"/>
        <end position="329"/>
    </location>
</feature>
<feature type="glycosylation site" description="N-linked (GlcNAc...) asparagine" evidence="2">
    <location>
        <position position="3"/>
    </location>
</feature>
<feature type="glycosylation site" description="N-linked (GlcNAc...) asparagine" evidence="2">
    <location>
        <position position="13"/>
    </location>
</feature>
<feature type="glycosylation site" description="N-linked (GlcNAc...) asparagine" evidence="2">
    <location>
        <position position="25"/>
    </location>
</feature>
<feature type="disulfide bond" evidence="3">
    <location>
        <begin position="111"/>
        <end position="190"/>
    </location>
</feature>
<gene>
    <name type="primary">Npbwr1</name>
    <name type="synonym">Gpr7</name>
</gene>
<keyword id="KW-1003">Cell membrane</keyword>
<keyword id="KW-1015">Disulfide bond</keyword>
<keyword id="KW-0297">G-protein coupled receptor</keyword>
<keyword id="KW-0325">Glycoprotein</keyword>
<keyword id="KW-0472">Membrane</keyword>
<keyword id="KW-0675">Receptor</keyword>
<keyword id="KW-1185">Reference proteome</keyword>
<keyword id="KW-0807">Transducer</keyword>
<keyword id="KW-0812">Transmembrane</keyword>
<keyword id="KW-1133">Transmembrane helix</keyword>
<protein>
    <recommendedName>
        <fullName>Neuropeptides B/W receptor type 1</fullName>
    </recommendedName>
    <alternativeName>
        <fullName>G-protein coupled receptor 7</fullName>
    </alternativeName>
</protein>
<organism>
    <name type="scientific">Rattus norvegicus</name>
    <name type="common">Rat</name>
    <dbReference type="NCBI Taxonomy" id="10116"/>
    <lineage>
        <taxon>Eukaryota</taxon>
        <taxon>Metazoa</taxon>
        <taxon>Chordata</taxon>
        <taxon>Craniata</taxon>
        <taxon>Vertebrata</taxon>
        <taxon>Euteleostomi</taxon>
        <taxon>Mammalia</taxon>
        <taxon>Eutheria</taxon>
        <taxon>Euarchontoglires</taxon>
        <taxon>Glires</taxon>
        <taxon>Rodentia</taxon>
        <taxon>Myomorpha</taxon>
        <taxon>Muroidea</taxon>
        <taxon>Muridae</taxon>
        <taxon>Murinae</taxon>
        <taxon>Rattus</taxon>
    </lineage>
</organism>
<name>NPBW1_RAT</name>
<evidence type="ECO:0000250" key="1"/>
<evidence type="ECO:0000255" key="2"/>
<evidence type="ECO:0000255" key="3">
    <source>
        <dbReference type="PROSITE-ProRule" id="PRU00521"/>
    </source>
</evidence>